<sequence length="443" mass="48185">MAKYFGTDGIRGEVANSTITVEFTQKLGNAVGSLINQKNYPKFVIVGQDTRSSGGFLKFALVSGLNAAGIDVLDLGVVPTPVVAFMTVKYRAAAGFVITASHNKFTDNGIKLFSSNGFKLDDALEEEVEDMIDGDFIYQPQFKFGSYKILANAIDEYIESIHSRFAKFVNYKGKVVVDCAHGAASHNFEALLDKFGINYVSIASNPDGLNINVGCGATCVSNIKKAVKEQKADLGISLDGDADRIIIVDENGQEIDGDGILNILAQYSDICGGTNGIVGTQMTNMSYENHYRANKIPFIRSKVGDRYVLEDLVKYGYKIGGESSGHVINLNFGTTGDGLFTAIQLLAIFSQADKPVSEFKLQGELMQQTLINVPLTKKVAREDLQKVASDVNDVEKRLGNRGRVLLRPSGTEPVLRVMVEADDKSLATNEAEYLVEKVKQKLV</sequence>
<organism>
    <name type="scientific">Francisella tularensis subsp. tularensis (strain WY96-3418)</name>
    <dbReference type="NCBI Taxonomy" id="418136"/>
    <lineage>
        <taxon>Bacteria</taxon>
        <taxon>Pseudomonadati</taxon>
        <taxon>Pseudomonadota</taxon>
        <taxon>Gammaproteobacteria</taxon>
        <taxon>Thiotrichales</taxon>
        <taxon>Francisellaceae</taxon>
        <taxon>Francisella</taxon>
    </lineage>
</organism>
<dbReference type="EC" id="5.4.2.10" evidence="1"/>
<dbReference type="EMBL" id="CP000608">
    <property type="protein sequence ID" value="ABO46141.1"/>
    <property type="molecule type" value="Genomic_DNA"/>
</dbReference>
<dbReference type="RefSeq" id="WP_003024630.1">
    <property type="nucleotide sequence ID" value="NC_009257.1"/>
</dbReference>
<dbReference type="SMR" id="A4IW39"/>
<dbReference type="KEGG" id="ftw:FTW_0155"/>
<dbReference type="HOGENOM" id="CLU_016950_7_0_6"/>
<dbReference type="GO" id="GO:0005829">
    <property type="term" value="C:cytosol"/>
    <property type="evidence" value="ECO:0007669"/>
    <property type="project" value="TreeGrafter"/>
</dbReference>
<dbReference type="GO" id="GO:0000287">
    <property type="term" value="F:magnesium ion binding"/>
    <property type="evidence" value="ECO:0007669"/>
    <property type="project" value="UniProtKB-UniRule"/>
</dbReference>
<dbReference type="GO" id="GO:0008966">
    <property type="term" value="F:phosphoglucosamine mutase activity"/>
    <property type="evidence" value="ECO:0007669"/>
    <property type="project" value="UniProtKB-UniRule"/>
</dbReference>
<dbReference type="GO" id="GO:0004615">
    <property type="term" value="F:phosphomannomutase activity"/>
    <property type="evidence" value="ECO:0007669"/>
    <property type="project" value="TreeGrafter"/>
</dbReference>
<dbReference type="GO" id="GO:0005975">
    <property type="term" value="P:carbohydrate metabolic process"/>
    <property type="evidence" value="ECO:0007669"/>
    <property type="project" value="InterPro"/>
</dbReference>
<dbReference type="GO" id="GO:0009252">
    <property type="term" value="P:peptidoglycan biosynthetic process"/>
    <property type="evidence" value="ECO:0007669"/>
    <property type="project" value="TreeGrafter"/>
</dbReference>
<dbReference type="GO" id="GO:0006048">
    <property type="term" value="P:UDP-N-acetylglucosamine biosynthetic process"/>
    <property type="evidence" value="ECO:0007669"/>
    <property type="project" value="TreeGrafter"/>
</dbReference>
<dbReference type="CDD" id="cd05802">
    <property type="entry name" value="GlmM"/>
    <property type="match status" value="1"/>
</dbReference>
<dbReference type="FunFam" id="3.30.310.50:FF:000001">
    <property type="entry name" value="Phosphoglucosamine mutase"/>
    <property type="match status" value="1"/>
</dbReference>
<dbReference type="FunFam" id="3.40.120.10:FF:000001">
    <property type="entry name" value="Phosphoglucosamine mutase"/>
    <property type="match status" value="1"/>
</dbReference>
<dbReference type="FunFam" id="3.40.120.10:FF:000003">
    <property type="entry name" value="Phosphoglucosamine mutase"/>
    <property type="match status" value="1"/>
</dbReference>
<dbReference type="Gene3D" id="3.40.120.10">
    <property type="entry name" value="Alpha-D-Glucose-1,6-Bisphosphate, subunit A, domain 3"/>
    <property type="match status" value="3"/>
</dbReference>
<dbReference type="Gene3D" id="3.30.310.50">
    <property type="entry name" value="Alpha-D-phosphohexomutase, C-terminal domain"/>
    <property type="match status" value="1"/>
</dbReference>
<dbReference type="HAMAP" id="MF_01554_B">
    <property type="entry name" value="GlmM_B"/>
    <property type="match status" value="1"/>
</dbReference>
<dbReference type="InterPro" id="IPR005844">
    <property type="entry name" value="A-D-PHexomutase_a/b/a-I"/>
</dbReference>
<dbReference type="InterPro" id="IPR016055">
    <property type="entry name" value="A-D-PHexomutase_a/b/a-I/II/III"/>
</dbReference>
<dbReference type="InterPro" id="IPR005845">
    <property type="entry name" value="A-D-PHexomutase_a/b/a-II"/>
</dbReference>
<dbReference type="InterPro" id="IPR005846">
    <property type="entry name" value="A-D-PHexomutase_a/b/a-III"/>
</dbReference>
<dbReference type="InterPro" id="IPR005843">
    <property type="entry name" value="A-D-PHexomutase_C"/>
</dbReference>
<dbReference type="InterPro" id="IPR036900">
    <property type="entry name" value="A-D-PHexomutase_C_sf"/>
</dbReference>
<dbReference type="InterPro" id="IPR005841">
    <property type="entry name" value="Alpha-D-phosphohexomutase_SF"/>
</dbReference>
<dbReference type="InterPro" id="IPR006352">
    <property type="entry name" value="GlmM_bact"/>
</dbReference>
<dbReference type="InterPro" id="IPR050060">
    <property type="entry name" value="Phosphoglucosamine_mutase"/>
</dbReference>
<dbReference type="NCBIfam" id="TIGR01455">
    <property type="entry name" value="glmM"/>
    <property type="match status" value="1"/>
</dbReference>
<dbReference type="NCBIfam" id="NF008139">
    <property type="entry name" value="PRK10887.1"/>
    <property type="match status" value="1"/>
</dbReference>
<dbReference type="PANTHER" id="PTHR42946:SF1">
    <property type="entry name" value="PHOSPHOGLUCOMUTASE (ALPHA-D-GLUCOSE-1,6-BISPHOSPHATE-DEPENDENT)"/>
    <property type="match status" value="1"/>
</dbReference>
<dbReference type="PANTHER" id="PTHR42946">
    <property type="entry name" value="PHOSPHOHEXOSE MUTASE"/>
    <property type="match status" value="1"/>
</dbReference>
<dbReference type="Pfam" id="PF02878">
    <property type="entry name" value="PGM_PMM_I"/>
    <property type="match status" value="1"/>
</dbReference>
<dbReference type="Pfam" id="PF02879">
    <property type="entry name" value="PGM_PMM_II"/>
    <property type="match status" value="1"/>
</dbReference>
<dbReference type="Pfam" id="PF02880">
    <property type="entry name" value="PGM_PMM_III"/>
    <property type="match status" value="1"/>
</dbReference>
<dbReference type="Pfam" id="PF00408">
    <property type="entry name" value="PGM_PMM_IV"/>
    <property type="match status" value="1"/>
</dbReference>
<dbReference type="PRINTS" id="PR00509">
    <property type="entry name" value="PGMPMM"/>
</dbReference>
<dbReference type="SUPFAM" id="SSF55957">
    <property type="entry name" value="Phosphoglucomutase, C-terminal domain"/>
    <property type="match status" value="1"/>
</dbReference>
<dbReference type="SUPFAM" id="SSF53738">
    <property type="entry name" value="Phosphoglucomutase, first 3 domains"/>
    <property type="match status" value="3"/>
</dbReference>
<keyword id="KW-0413">Isomerase</keyword>
<keyword id="KW-0460">Magnesium</keyword>
<keyword id="KW-0479">Metal-binding</keyword>
<keyword id="KW-0597">Phosphoprotein</keyword>
<accession>A4IW39</accession>
<proteinExistence type="inferred from homology"/>
<protein>
    <recommendedName>
        <fullName evidence="1">Phosphoglucosamine mutase</fullName>
        <ecNumber evidence="1">5.4.2.10</ecNumber>
    </recommendedName>
</protein>
<name>GLMM_FRATW</name>
<feature type="chain" id="PRO_0000301317" description="Phosphoglucosamine mutase">
    <location>
        <begin position="1"/>
        <end position="443"/>
    </location>
</feature>
<feature type="active site" description="Phosphoserine intermediate" evidence="1">
    <location>
        <position position="101"/>
    </location>
</feature>
<feature type="binding site" description="via phosphate group" evidence="1">
    <location>
        <position position="101"/>
    </location>
    <ligand>
        <name>Mg(2+)</name>
        <dbReference type="ChEBI" id="CHEBI:18420"/>
    </ligand>
</feature>
<feature type="binding site" evidence="1">
    <location>
        <position position="239"/>
    </location>
    <ligand>
        <name>Mg(2+)</name>
        <dbReference type="ChEBI" id="CHEBI:18420"/>
    </ligand>
</feature>
<feature type="binding site" evidence="1">
    <location>
        <position position="241"/>
    </location>
    <ligand>
        <name>Mg(2+)</name>
        <dbReference type="ChEBI" id="CHEBI:18420"/>
    </ligand>
</feature>
<feature type="binding site" evidence="1">
    <location>
        <position position="243"/>
    </location>
    <ligand>
        <name>Mg(2+)</name>
        <dbReference type="ChEBI" id="CHEBI:18420"/>
    </ligand>
</feature>
<feature type="modified residue" description="Phosphoserine" evidence="1">
    <location>
        <position position="101"/>
    </location>
</feature>
<evidence type="ECO:0000255" key="1">
    <source>
        <dbReference type="HAMAP-Rule" id="MF_01554"/>
    </source>
</evidence>
<gene>
    <name evidence="1" type="primary">glmM</name>
    <name type="ordered locus">FTW_0155</name>
</gene>
<reference key="1">
    <citation type="journal article" date="2007" name="PLoS ONE">
        <title>Complete genomic characterization of a pathogenic A.II strain of Francisella tularensis subspecies tularensis.</title>
        <authorList>
            <person name="Beckstrom-Sternberg S.M."/>
            <person name="Auerbach R.K."/>
            <person name="Godbole S."/>
            <person name="Pearson J.V."/>
            <person name="Beckstrom-Sternberg J.S."/>
            <person name="Deng Z."/>
            <person name="Munk C."/>
            <person name="Kubota K."/>
            <person name="Zhou Y."/>
            <person name="Bruce D."/>
            <person name="Noronha J."/>
            <person name="Scheuermann R.H."/>
            <person name="Wang A."/>
            <person name="Wei X."/>
            <person name="Wang J."/>
            <person name="Hao J."/>
            <person name="Wagner D.M."/>
            <person name="Brettin T.S."/>
            <person name="Brown N."/>
            <person name="Gilna P."/>
            <person name="Keim P.S."/>
        </authorList>
    </citation>
    <scope>NUCLEOTIDE SEQUENCE [LARGE SCALE GENOMIC DNA]</scope>
    <source>
        <strain>WY96-3418</strain>
    </source>
</reference>
<comment type="function">
    <text evidence="1">Catalyzes the conversion of glucosamine-6-phosphate to glucosamine-1-phosphate.</text>
</comment>
<comment type="catalytic activity">
    <reaction evidence="1">
        <text>alpha-D-glucosamine 1-phosphate = D-glucosamine 6-phosphate</text>
        <dbReference type="Rhea" id="RHEA:23424"/>
        <dbReference type="ChEBI" id="CHEBI:58516"/>
        <dbReference type="ChEBI" id="CHEBI:58725"/>
        <dbReference type="EC" id="5.4.2.10"/>
    </reaction>
</comment>
<comment type="cofactor">
    <cofactor evidence="1">
        <name>Mg(2+)</name>
        <dbReference type="ChEBI" id="CHEBI:18420"/>
    </cofactor>
    <text evidence="1">Binds 1 Mg(2+) ion per subunit.</text>
</comment>
<comment type="PTM">
    <text evidence="1">Activated by phosphorylation.</text>
</comment>
<comment type="similarity">
    <text evidence="1">Belongs to the phosphohexose mutase family.</text>
</comment>